<sequence>MHVTVSEILERFQPEGLITNHIGPDSVITRVAPIEDCAPGDLVFIDKPKYVGDVLQRKPAAVLTTPAIAAEFGESPALAVLIAPNVRLAIALIKQAYADRDVRDTEWPRIHPSAVIHASVEVPADAIIGPGVVIGADVVLGRGVVLMANVVIERGARIGAETVLHPGVTVCIDCEIGAGCILKPGCVIGSEGFGFAQDAQRRNYRIPHTGKVIIEDRVVIGANTTIDRATYGATVVRSGTIIDALVHLGHNVEIGEDCILCAHTGLSGSTRFGKRVIATGQTGTIDHITVADDSVLLHRAGLNTSIKQPGMYAGGPAQPLQQYLKNMAVMPRLHEIWSRLKKLEKAVAQLGSAE</sequence>
<name>LPXD_METCA</name>
<organism>
    <name type="scientific">Methylococcus capsulatus (strain ATCC 33009 / NCIMB 11132 / Bath)</name>
    <dbReference type="NCBI Taxonomy" id="243233"/>
    <lineage>
        <taxon>Bacteria</taxon>
        <taxon>Pseudomonadati</taxon>
        <taxon>Pseudomonadota</taxon>
        <taxon>Gammaproteobacteria</taxon>
        <taxon>Methylococcales</taxon>
        <taxon>Methylococcaceae</taxon>
        <taxon>Methylococcus</taxon>
    </lineage>
</organism>
<accession>Q9AIP8</accession>
<accession>Q604F6</accession>
<keyword id="KW-0012">Acyltransferase</keyword>
<keyword id="KW-0441">Lipid A biosynthesis</keyword>
<keyword id="KW-0444">Lipid biosynthesis</keyword>
<keyword id="KW-0443">Lipid metabolism</keyword>
<keyword id="KW-1185">Reference proteome</keyword>
<keyword id="KW-0677">Repeat</keyword>
<keyword id="KW-0808">Transferase</keyword>
<evidence type="ECO:0000255" key="1">
    <source>
        <dbReference type="HAMAP-Rule" id="MF_00523"/>
    </source>
</evidence>
<protein>
    <recommendedName>
        <fullName evidence="1">UDP-3-O-acylglucosamine N-acyltransferase</fullName>
        <ecNumber evidence="1">2.3.1.191</ecNumber>
    </recommendedName>
</protein>
<gene>
    <name evidence="1" type="primary">lpxD</name>
    <name type="ordered locus">MCA2588</name>
</gene>
<reference key="1">
    <citation type="journal article" date="2004" name="PLoS Biol.">
        <title>Genomic insights into methanotrophy: the complete genome sequence of Methylococcus capsulatus (Bath).</title>
        <authorList>
            <person name="Ward N.L."/>
            <person name="Larsen O."/>
            <person name="Sakwa J."/>
            <person name="Bruseth L."/>
            <person name="Khouri H.M."/>
            <person name="Durkin A.S."/>
            <person name="Dimitrov G."/>
            <person name="Jiang L."/>
            <person name="Scanlan D."/>
            <person name="Kang K.H."/>
            <person name="Lewis M.R."/>
            <person name="Nelson K.E."/>
            <person name="Methe B.A."/>
            <person name="Wu M."/>
            <person name="Heidelberg J.F."/>
            <person name="Paulsen I.T."/>
            <person name="Fouts D.E."/>
            <person name="Ravel J."/>
            <person name="Tettelin H."/>
            <person name="Ren Q."/>
            <person name="Read T.D."/>
            <person name="DeBoy R.T."/>
            <person name="Seshadri R."/>
            <person name="Salzberg S.L."/>
            <person name="Jensen H.B."/>
            <person name="Birkeland N.K."/>
            <person name="Nelson W.C."/>
            <person name="Dodson R.J."/>
            <person name="Grindhaug S.H."/>
            <person name="Holt I.E."/>
            <person name="Eidhammer I."/>
            <person name="Jonasen I."/>
            <person name="Vanaken S."/>
            <person name="Utterback T.R."/>
            <person name="Feldblyum T.V."/>
            <person name="Fraser C.M."/>
            <person name="Lillehaug J.R."/>
            <person name="Eisen J.A."/>
        </authorList>
    </citation>
    <scope>NUCLEOTIDE SEQUENCE [LARGE SCALE GENOMIC DNA]</scope>
    <source>
        <strain>ATCC 33009 / NCIMB 11132 / Bath</strain>
    </source>
</reference>
<reference key="2">
    <citation type="journal article" date="2001" name="Arch. Microbiol.">
        <title>The C-terminal part of the surface-associated protein MopE of the methanotroph Methylococcus capsulatus (Bath) is secreted into the growth medium.</title>
        <authorList>
            <person name="Fjellbirkeland A."/>
            <person name="Kruger P.G."/>
            <person name="Bemanian V."/>
            <person name="Hogh B.T."/>
            <person name="Murrell J.C."/>
            <person name="Jensen H.B."/>
        </authorList>
    </citation>
    <scope>NUCLEOTIDE SEQUENCE [GENOMIC DNA] OF 71-354</scope>
    <source>
        <strain>ATCC 33009 / NCIMB 11132 / Bath</strain>
    </source>
</reference>
<dbReference type="EC" id="2.3.1.191" evidence="1"/>
<dbReference type="EMBL" id="AE017282">
    <property type="protein sequence ID" value="AAU91316.1"/>
    <property type="molecule type" value="Genomic_DNA"/>
</dbReference>
<dbReference type="EMBL" id="AF247667">
    <property type="protein sequence ID" value="AAK28399.1"/>
    <property type="molecule type" value="Genomic_DNA"/>
</dbReference>
<dbReference type="RefSeq" id="WP_010961803.1">
    <property type="nucleotide sequence ID" value="NC_002977.6"/>
</dbReference>
<dbReference type="SMR" id="Q9AIP8"/>
<dbReference type="STRING" id="243233.MCA2588"/>
<dbReference type="GeneID" id="88224773"/>
<dbReference type="KEGG" id="mca:MCA2588"/>
<dbReference type="eggNOG" id="COG1044">
    <property type="taxonomic scope" value="Bacteria"/>
</dbReference>
<dbReference type="HOGENOM" id="CLU_049865_0_0_6"/>
<dbReference type="UniPathway" id="UPA00973"/>
<dbReference type="Proteomes" id="UP000006821">
    <property type="component" value="Chromosome"/>
</dbReference>
<dbReference type="GO" id="GO:0016020">
    <property type="term" value="C:membrane"/>
    <property type="evidence" value="ECO:0007669"/>
    <property type="project" value="GOC"/>
</dbReference>
<dbReference type="GO" id="GO:0016410">
    <property type="term" value="F:N-acyltransferase activity"/>
    <property type="evidence" value="ECO:0007669"/>
    <property type="project" value="InterPro"/>
</dbReference>
<dbReference type="GO" id="GO:0009245">
    <property type="term" value="P:lipid A biosynthetic process"/>
    <property type="evidence" value="ECO:0007669"/>
    <property type="project" value="UniProtKB-UniRule"/>
</dbReference>
<dbReference type="CDD" id="cd03352">
    <property type="entry name" value="LbH_LpxD"/>
    <property type="match status" value="1"/>
</dbReference>
<dbReference type="Gene3D" id="2.160.10.10">
    <property type="entry name" value="Hexapeptide repeat proteins"/>
    <property type="match status" value="1"/>
</dbReference>
<dbReference type="Gene3D" id="3.40.1390.10">
    <property type="entry name" value="MurE/MurF, N-terminal domain"/>
    <property type="match status" value="1"/>
</dbReference>
<dbReference type="HAMAP" id="MF_00523">
    <property type="entry name" value="LpxD"/>
    <property type="match status" value="1"/>
</dbReference>
<dbReference type="InterPro" id="IPR001451">
    <property type="entry name" value="Hexapep"/>
</dbReference>
<dbReference type="InterPro" id="IPR018357">
    <property type="entry name" value="Hexapep_transf_CS"/>
</dbReference>
<dbReference type="InterPro" id="IPR007691">
    <property type="entry name" value="LpxD"/>
</dbReference>
<dbReference type="InterPro" id="IPR011004">
    <property type="entry name" value="Trimer_LpxA-like_sf"/>
</dbReference>
<dbReference type="InterPro" id="IPR020573">
    <property type="entry name" value="UDP_GlcNAc_AcTrfase_non-rep"/>
</dbReference>
<dbReference type="NCBIfam" id="TIGR01853">
    <property type="entry name" value="lipid_A_lpxD"/>
    <property type="match status" value="1"/>
</dbReference>
<dbReference type="NCBIfam" id="NF002060">
    <property type="entry name" value="PRK00892.1"/>
    <property type="match status" value="1"/>
</dbReference>
<dbReference type="PANTHER" id="PTHR43378">
    <property type="entry name" value="UDP-3-O-ACYLGLUCOSAMINE N-ACYLTRANSFERASE"/>
    <property type="match status" value="1"/>
</dbReference>
<dbReference type="PANTHER" id="PTHR43378:SF2">
    <property type="entry name" value="UDP-3-O-ACYLGLUCOSAMINE N-ACYLTRANSFERASE 1, MITOCHONDRIAL-RELATED"/>
    <property type="match status" value="1"/>
</dbReference>
<dbReference type="Pfam" id="PF00132">
    <property type="entry name" value="Hexapep"/>
    <property type="match status" value="2"/>
</dbReference>
<dbReference type="Pfam" id="PF14602">
    <property type="entry name" value="Hexapep_2"/>
    <property type="match status" value="1"/>
</dbReference>
<dbReference type="Pfam" id="PF04613">
    <property type="entry name" value="LpxD"/>
    <property type="match status" value="1"/>
</dbReference>
<dbReference type="SUPFAM" id="SSF51161">
    <property type="entry name" value="Trimeric LpxA-like enzymes"/>
    <property type="match status" value="1"/>
</dbReference>
<dbReference type="PROSITE" id="PS00101">
    <property type="entry name" value="HEXAPEP_TRANSFERASES"/>
    <property type="match status" value="1"/>
</dbReference>
<comment type="function">
    <text evidence="1">Catalyzes the N-acylation of UDP-3-O-acylglucosamine using 3-hydroxyacyl-ACP as the acyl donor. Is involved in the biosynthesis of lipid A, a phosphorylated glycolipid that anchors the lipopolysaccharide to the outer membrane of the cell.</text>
</comment>
<comment type="catalytic activity">
    <reaction evidence="1">
        <text>a UDP-3-O-[(3R)-3-hydroxyacyl]-alpha-D-glucosamine + a (3R)-hydroxyacyl-[ACP] = a UDP-2-N,3-O-bis[(3R)-3-hydroxyacyl]-alpha-D-glucosamine + holo-[ACP] + H(+)</text>
        <dbReference type="Rhea" id="RHEA:53836"/>
        <dbReference type="Rhea" id="RHEA-COMP:9685"/>
        <dbReference type="Rhea" id="RHEA-COMP:9945"/>
        <dbReference type="ChEBI" id="CHEBI:15378"/>
        <dbReference type="ChEBI" id="CHEBI:64479"/>
        <dbReference type="ChEBI" id="CHEBI:78827"/>
        <dbReference type="ChEBI" id="CHEBI:137740"/>
        <dbReference type="ChEBI" id="CHEBI:137748"/>
        <dbReference type="EC" id="2.3.1.191"/>
    </reaction>
</comment>
<comment type="pathway">
    <text evidence="1">Bacterial outer membrane biogenesis; LPS lipid A biosynthesis.</text>
</comment>
<comment type="subunit">
    <text evidence="1">Homotrimer.</text>
</comment>
<comment type="similarity">
    <text evidence="1">Belongs to the transferase hexapeptide repeat family. LpxD subfamily.</text>
</comment>
<proteinExistence type="inferred from homology"/>
<feature type="chain" id="PRO_0000059682" description="UDP-3-O-acylglucosamine N-acyltransferase">
    <location>
        <begin position="1"/>
        <end position="354"/>
    </location>
</feature>
<feature type="active site" description="Proton acceptor" evidence="1">
    <location>
        <position position="250"/>
    </location>
</feature>